<comment type="function">
    <text evidence="1">Involved in nucleolar integrity and required for processing of the pre-rRNA for the 60S ribosome subunit.</text>
</comment>
<comment type="subcellular location">
    <subcellularLocation>
        <location evidence="1">Nucleus</location>
        <location evidence="1">Nucleolus</location>
    </subcellularLocation>
</comment>
<comment type="similarity">
    <text evidence="3">Belongs to the CGR1 family.</text>
</comment>
<feature type="chain" id="PRO_0000278961" description="rRNA-processing protein CGR1">
    <location>
        <begin position="1"/>
        <end position="123"/>
    </location>
</feature>
<feature type="coiled-coil region" evidence="2">
    <location>
        <begin position="47"/>
        <end position="105"/>
    </location>
</feature>
<reference key="1">
    <citation type="journal article" date="2004" name="Nature">
        <title>Genome evolution in yeasts.</title>
        <authorList>
            <person name="Dujon B."/>
            <person name="Sherman D."/>
            <person name="Fischer G."/>
            <person name="Durrens P."/>
            <person name="Casaregola S."/>
            <person name="Lafontaine I."/>
            <person name="de Montigny J."/>
            <person name="Marck C."/>
            <person name="Neuveglise C."/>
            <person name="Talla E."/>
            <person name="Goffard N."/>
            <person name="Frangeul L."/>
            <person name="Aigle M."/>
            <person name="Anthouard V."/>
            <person name="Babour A."/>
            <person name="Barbe V."/>
            <person name="Barnay S."/>
            <person name="Blanchin S."/>
            <person name="Beckerich J.-M."/>
            <person name="Beyne E."/>
            <person name="Bleykasten C."/>
            <person name="Boisrame A."/>
            <person name="Boyer J."/>
            <person name="Cattolico L."/>
            <person name="Confanioleri F."/>
            <person name="de Daruvar A."/>
            <person name="Despons L."/>
            <person name="Fabre E."/>
            <person name="Fairhead C."/>
            <person name="Ferry-Dumazet H."/>
            <person name="Groppi A."/>
            <person name="Hantraye F."/>
            <person name="Hennequin C."/>
            <person name="Jauniaux N."/>
            <person name="Joyet P."/>
            <person name="Kachouri R."/>
            <person name="Kerrest A."/>
            <person name="Koszul R."/>
            <person name="Lemaire M."/>
            <person name="Lesur I."/>
            <person name="Ma L."/>
            <person name="Muller H."/>
            <person name="Nicaud J.-M."/>
            <person name="Nikolski M."/>
            <person name="Oztas S."/>
            <person name="Ozier-Kalogeropoulos O."/>
            <person name="Pellenz S."/>
            <person name="Potier S."/>
            <person name="Richard G.-F."/>
            <person name="Straub M.-L."/>
            <person name="Suleau A."/>
            <person name="Swennen D."/>
            <person name="Tekaia F."/>
            <person name="Wesolowski-Louvel M."/>
            <person name="Westhof E."/>
            <person name="Wirth B."/>
            <person name="Zeniou-Meyer M."/>
            <person name="Zivanovic Y."/>
            <person name="Bolotin-Fukuhara M."/>
            <person name="Thierry A."/>
            <person name="Bouchier C."/>
            <person name="Caudron B."/>
            <person name="Scarpelli C."/>
            <person name="Gaillardin C."/>
            <person name="Weissenbach J."/>
            <person name="Wincker P."/>
            <person name="Souciet J.-L."/>
        </authorList>
    </citation>
    <scope>NUCLEOTIDE SEQUENCE [LARGE SCALE GENOMIC DNA]</scope>
    <source>
        <strain>CLIB 122 / E 150</strain>
    </source>
</reference>
<name>CGR1_YARLI</name>
<accession>Q6C1V5</accession>
<protein>
    <recommendedName>
        <fullName>rRNA-processing protein CGR1</fullName>
    </recommendedName>
</protein>
<sequence length="123" mass="14973">MSEQEEVQLPKLGKAPQVRVNGKNWKETKTPFRTSSLSVPLKHRSWERRQKERENLRMIKAKEKEMKDEKEAEHAEKVRRIKERRMAKEEKERLEKMTAILSAKKLARRKRKEKRNKLLRERN</sequence>
<organism>
    <name type="scientific">Yarrowia lipolytica (strain CLIB 122 / E 150)</name>
    <name type="common">Yeast</name>
    <name type="synonym">Candida lipolytica</name>
    <dbReference type="NCBI Taxonomy" id="284591"/>
    <lineage>
        <taxon>Eukaryota</taxon>
        <taxon>Fungi</taxon>
        <taxon>Dikarya</taxon>
        <taxon>Ascomycota</taxon>
        <taxon>Saccharomycotina</taxon>
        <taxon>Dipodascomycetes</taxon>
        <taxon>Dipodascales</taxon>
        <taxon>Dipodascales incertae sedis</taxon>
        <taxon>Yarrowia</taxon>
    </lineage>
</organism>
<evidence type="ECO:0000250" key="1"/>
<evidence type="ECO:0000255" key="2"/>
<evidence type="ECO:0000305" key="3"/>
<proteinExistence type="inferred from homology"/>
<dbReference type="EMBL" id="CR382132">
    <property type="protein sequence ID" value="CAG78164.1"/>
    <property type="molecule type" value="Genomic_DNA"/>
</dbReference>
<dbReference type="RefSeq" id="XP_505357.1">
    <property type="nucleotide sequence ID" value="XM_505357.1"/>
</dbReference>
<dbReference type="SMR" id="Q6C1V5"/>
<dbReference type="FunCoup" id="Q6C1V5">
    <property type="interactions" value="132"/>
</dbReference>
<dbReference type="STRING" id="284591.Q6C1V5"/>
<dbReference type="EnsemblFungi" id="CAG78164">
    <property type="protein sequence ID" value="CAG78164"/>
    <property type="gene ID" value="YALI0_F13101g"/>
</dbReference>
<dbReference type="KEGG" id="yli:2909012"/>
<dbReference type="VEuPathDB" id="FungiDB:YALI0_F13101g"/>
<dbReference type="HOGENOM" id="CLU_125051_0_1_1"/>
<dbReference type="InParanoid" id="Q6C1V5"/>
<dbReference type="OMA" id="NGKQWHD"/>
<dbReference type="OrthoDB" id="124603at4891"/>
<dbReference type="Proteomes" id="UP000001300">
    <property type="component" value="Chromosome F"/>
</dbReference>
<dbReference type="GO" id="GO:0005730">
    <property type="term" value="C:nucleolus"/>
    <property type="evidence" value="ECO:0007669"/>
    <property type="project" value="UniProtKB-SubCell"/>
</dbReference>
<dbReference type="GO" id="GO:0006364">
    <property type="term" value="P:rRNA processing"/>
    <property type="evidence" value="ECO:0007669"/>
    <property type="project" value="UniProtKB-KW"/>
</dbReference>
<dbReference type="InterPro" id="IPR005579">
    <property type="entry name" value="Cgr1-like"/>
</dbReference>
<dbReference type="Pfam" id="PF03879">
    <property type="entry name" value="Cgr1"/>
    <property type="match status" value="1"/>
</dbReference>
<gene>
    <name type="primary">CGR1</name>
    <name type="ordered locus">YALI0F13101g</name>
</gene>
<keyword id="KW-0175">Coiled coil</keyword>
<keyword id="KW-0539">Nucleus</keyword>
<keyword id="KW-1185">Reference proteome</keyword>
<keyword id="KW-0690">Ribosome biogenesis</keyword>
<keyword id="KW-0698">rRNA processing</keyword>